<keyword id="KW-0027">Amidation</keyword>
<keyword id="KW-0903">Direct protein sequencing</keyword>
<keyword id="KW-1015">Disulfide bond</keyword>
<keyword id="KW-0872">Ion channel impairing toxin</keyword>
<keyword id="KW-0528">Neurotoxin</keyword>
<keyword id="KW-0964">Secreted</keyword>
<keyword id="KW-0800">Toxin</keyword>
<keyword id="KW-0738">Voltage-gated sodium channel impairing toxin</keyword>
<organism>
    <name type="scientific">Buthus occitanus tunetanus</name>
    <name type="common">Common European scorpion</name>
    <name type="synonym">Buthus tunetanus</name>
    <dbReference type="NCBI Taxonomy" id="6871"/>
    <lineage>
        <taxon>Eukaryota</taxon>
        <taxon>Metazoa</taxon>
        <taxon>Ecdysozoa</taxon>
        <taxon>Arthropoda</taxon>
        <taxon>Chelicerata</taxon>
        <taxon>Arachnida</taxon>
        <taxon>Scorpiones</taxon>
        <taxon>Buthida</taxon>
        <taxon>Buthoidea</taxon>
        <taxon>Buthidae</taxon>
        <taxon>Buthus</taxon>
    </lineage>
</organism>
<reference key="1">
    <citation type="journal article" date="1997" name="Toxicon">
        <title>Purification, structure and activity of three insect toxins from Buthus occitanus tunetanus venom.</title>
        <authorList>
            <person name="Borchani L."/>
            <person name="Stankiewicz M."/>
            <person name="Kopeyan C."/>
            <person name="Mansuelle P."/>
            <person name="Kharrat R."/>
            <person name="Cestele S."/>
            <person name="Karoui H."/>
            <person name="Rochat H."/>
            <person name="Pelhate M."/>
            <person name="el Ayeb M."/>
        </authorList>
    </citation>
    <scope>PROTEIN SEQUENCE</scope>
    <scope>AMIDATION AT GLY-61</scope>
    <scope>FUNCTION</scope>
    <scope>TOXIC DOSE</scope>
    <scope>MASS SPECTROMETRY</scope>
    <source>
        <tissue>Venom</tissue>
    </source>
</reference>
<protein>
    <recommendedName>
        <fullName>Beta-insect depressant toxin BotIT5</fullName>
        <shortName>Insect toxin 5</shortName>
    </recommendedName>
</protein>
<sequence length="61" mass="6817">DGYIRKRDGCKVSCLFGNEGCDKECKAYGGSYGYCWTWGLACWCEGLPDDKTWKSETNTCG</sequence>
<proteinExistence type="evidence at protein level"/>
<comment type="function">
    <text evidence="2">Depressant insect beta-toxins cause a transient contraction paralysis followed by a slow flaccid paralysis. They bind voltage-independently at site-4 of sodium channels (Nav) and shift the voltage of activation toward more negative potentials thereby affecting sodium channel activation and promoting spontaneous and repetitive firing. This toxin is active only on insects.</text>
</comment>
<comment type="subcellular location">
    <subcellularLocation>
        <location>Secreted</location>
    </subcellularLocation>
</comment>
<comment type="tissue specificity">
    <text>Expressed by the venom gland.</text>
</comment>
<comment type="domain">
    <text evidence="3">Has the structural arrangement of an alpha-helix connected to antiparallel beta-sheets by disulfide bonds (CS-alpha/beta).</text>
</comment>
<comment type="mass spectrometry" mass="6791.78" error="1.28" method="Electrospray" evidence="2"/>
<comment type="toxic dose">
    <text evidence="2">LD(50) is 1.1 ug/g in Blattella germanica.</text>
</comment>
<comment type="similarity">
    <text evidence="3">Belongs to the long (4 C-C) scorpion toxin superfamily. Sodium channel inhibitor family. Beta subfamily.</text>
</comment>
<comment type="caution">
    <text evidence="3">The measured molecular weight is 17 daltons lower than the expected one suggesting an experimental error.</text>
</comment>
<feature type="chain" id="PRO_0000066716" description="Beta-insect depressant toxin BotIT5">
    <location>
        <begin position="1"/>
        <end position="61"/>
    </location>
</feature>
<feature type="domain" description="LCN-type CS-alpha/beta" evidence="1">
    <location>
        <begin position="1"/>
        <end position="61"/>
    </location>
</feature>
<feature type="modified residue" description="Glycine amide" evidence="2">
    <location>
        <position position="61"/>
    </location>
</feature>
<feature type="disulfide bond" evidence="1">
    <location>
        <begin position="10"/>
        <end position="60"/>
    </location>
</feature>
<feature type="disulfide bond" evidence="1">
    <location>
        <begin position="14"/>
        <end position="35"/>
    </location>
</feature>
<feature type="disulfide bond" evidence="1">
    <location>
        <begin position="21"/>
        <end position="42"/>
    </location>
</feature>
<feature type="disulfide bond" evidence="1">
    <location>
        <begin position="25"/>
        <end position="44"/>
    </location>
</feature>
<name>SIX5_BUTOC</name>
<dbReference type="SMR" id="P55904"/>
<dbReference type="GO" id="GO:0005576">
    <property type="term" value="C:extracellular region"/>
    <property type="evidence" value="ECO:0007669"/>
    <property type="project" value="UniProtKB-SubCell"/>
</dbReference>
<dbReference type="GO" id="GO:0019871">
    <property type="term" value="F:sodium channel inhibitor activity"/>
    <property type="evidence" value="ECO:0007669"/>
    <property type="project" value="InterPro"/>
</dbReference>
<dbReference type="GO" id="GO:0090729">
    <property type="term" value="F:toxin activity"/>
    <property type="evidence" value="ECO:0007669"/>
    <property type="project" value="UniProtKB-KW"/>
</dbReference>
<dbReference type="GO" id="GO:0006952">
    <property type="term" value="P:defense response"/>
    <property type="evidence" value="ECO:0007669"/>
    <property type="project" value="InterPro"/>
</dbReference>
<dbReference type="CDD" id="cd23106">
    <property type="entry name" value="neurotoxins_LC_scorpion"/>
    <property type="match status" value="1"/>
</dbReference>
<dbReference type="FunFam" id="3.30.30.10:FF:000002">
    <property type="entry name" value="Alpha-like toxin BmK-M1"/>
    <property type="match status" value="1"/>
</dbReference>
<dbReference type="Gene3D" id="3.30.30.10">
    <property type="entry name" value="Knottin, scorpion toxin-like"/>
    <property type="match status" value="1"/>
</dbReference>
<dbReference type="InterPro" id="IPR044062">
    <property type="entry name" value="LCN-type_CS_alpha_beta_dom"/>
</dbReference>
<dbReference type="InterPro" id="IPR003614">
    <property type="entry name" value="Scorpion_toxin-like"/>
</dbReference>
<dbReference type="InterPro" id="IPR036574">
    <property type="entry name" value="Scorpion_toxin-like_sf"/>
</dbReference>
<dbReference type="InterPro" id="IPR018218">
    <property type="entry name" value="Scorpion_toxinL"/>
</dbReference>
<dbReference type="InterPro" id="IPR002061">
    <property type="entry name" value="Scorpion_toxinL/defensin"/>
</dbReference>
<dbReference type="Pfam" id="PF00537">
    <property type="entry name" value="Toxin_3"/>
    <property type="match status" value="1"/>
</dbReference>
<dbReference type="PRINTS" id="PR00285">
    <property type="entry name" value="SCORPNTOXIN"/>
</dbReference>
<dbReference type="SMART" id="SM00505">
    <property type="entry name" value="Knot1"/>
    <property type="match status" value="1"/>
</dbReference>
<dbReference type="SUPFAM" id="SSF57095">
    <property type="entry name" value="Scorpion toxin-like"/>
    <property type="match status" value="1"/>
</dbReference>
<dbReference type="PROSITE" id="PS51863">
    <property type="entry name" value="LCN_CSAB"/>
    <property type="match status" value="1"/>
</dbReference>
<accession>P55904</accession>
<evidence type="ECO:0000255" key="1">
    <source>
        <dbReference type="PROSITE-ProRule" id="PRU01210"/>
    </source>
</evidence>
<evidence type="ECO:0000269" key="2">
    <source>
    </source>
</evidence>
<evidence type="ECO:0000305" key="3"/>